<evidence type="ECO:0000269" key="1">
    <source>
    </source>
</evidence>
<evidence type="ECO:0000303" key="2">
    <source>
    </source>
</evidence>
<evidence type="ECO:0000305" key="3">
    <source>
    </source>
</evidence>
<evidence type="ECO:0000312" key="4">
    <source>
        <dbReference type="PDB" id="7LT7"/>
    </source>
</evidence>
<feature type="chain" id="PRO_0000458191" description="Peptide Hact-3">
    <location>
        <begin position="1"/>
        <end position="35"/>
    </location>
</feature>
<accession>C0HM25</accession>
<proteinExistence type="evidence at protein level"/>
<organism>
    <name type="scientific">Heliofungia actiniformis</name>
    <name type="common">Mushroom coral</name>
    <name type="synonym">Fungia actiniformis</name>
    <dbReference type="NCBI Taxonomy" id="75303"/>
    <lineage>
        <taxon>Eukaryota</taxon>
        <taxon>Metazoa</taxon>
        <taxon>Cnidaria</taxon>
        <taxon>Anthozoa</taxon>
        <taxon>Hexacorallia</taxon>
        <taxon>Scleractinia</taxon>
        <taxon>Fungiina</taxon>
        <taxon>Fungiidae</taxon>
        <taxon>Heliofungia</taxon>
    </lineage>
</organism>
<keyword id="KW-0002">3D-structure</keyword>
<keyword id="KW-0903">Direct protein sequencing</keyword>
<keyword id="KW-0166">Nematocyst</keyword>
<keyword id="KW-0964">Secreted</keyword>
<sequence length="35" mass="3932">FNPVGVAFKGNNGKYLSRIHRSGIDYTEFAKDNTD</sequence>
<reference evidence="4" key="1">
    <citation type="journal article" date="2022" name="J. Nat. Prod.">
        <title>Newly Discovered Peptides from the Coral Heliofungia actiniformis Show Structural and Functional Diversity.</title>
        <authorList>
            <person name="Schmidt C.A."/>
            <person name="Cooke I."/>
            <person name="Wilson D.T."/>
            <person name="Miller D.J."/>
            <person name="Peigneur S."/>
            <person name="Tytgat J."/>
            <person name="Field M."/>
            <person name="Takjoo R."/>
            <person name="Smout M.J."/>
            <person name="Loukas A."/>
            <person name="Daly N.L."/>
        </authorList>
    </citation>
    <scope>PROTEIN SEQUENCE OF 1-34</scope>
    <scope>STRUCTURE BY NMR</scope>
    <scope>FUNCTION</scope>
    <scope>SUBCELLULAR LOCATION</scope>
    <scope>TISSUE SPECIFICITY</scope>
    <scope>MASS SPECTROMETRY</scope>
</reference>
<dbReference type="PDB" id="7LT7">
    <property type="method" value="NMR"/>
    <property type="chains" value="A=1-35"/>
</dbReference>
<dbReference type="PDBsum" id="7LT7"/>
<dbReference type="GO" id="GO:0005576">
    <property type="term" value="C:extracellular region"/>
    <property type="evidence" value="ECO:0007669"/>
    <property type="project" value="UniProtKB-SubCell"/>
</dbReference>
<dbReference type="GO" id="GO:0042151">
    <property type="term" value="C:nematocyst"/>
    <property type="evidence" value="ECO:0007669"/>
    <property type="project" value="UniProtKB-SubCell"/>
</dbReference>
<dbReference type="Gene3D" id="2.80.10.50">
    <property type="match status" value="1"/>
</dbReference>
<comment type="function">
    <text evidence="1">Peptide with unknown function (PubMed:35829679). Does not exhibit antimicrobial activity against Escherichia coli and Staphylococcus aureus (PubMed:35829679).</text>
</comment>
<comment type="subcellular location">
    <subcellularLocation>
        <location evidence="1">Nematocyst</location>
    </subcellularLocation>
    <subcellularLocation>
        <location evidence="3">Secreted</location>
    </subcellularLocation>
</comment>
<comment type="tissue specificity">
    <text evidence="1">Expressed in tentacles.</text>
</comment>
<comment type="mass spectrometry" mass="3932.4534" method="MALDI" evidence="1"/>
<name>HACT3_HELAT</name>
<protein>
    <recommendedName>
        <fullName evidence="2">Peptide Hact-3</fullName>
    </recommendedName>
</protein>